<comment type="similarity">
    <text evidence="1">Belongs to the UPF0145 family.</text>
</comment>
<gene>
    <name type="ordered locus">Tlet_1264</name>
</gene>
<protein>
    <recommendedName>
        <fullName evidence="1">UPF0145 protein Tlet_1264</fullName>
    </recommendedName>
</protein>
<keyword id="KW-1185">Reference proteome</keyword>
<sequence length="106" mass="11191">MVLATTEQIAGYEIIETLGIVLGNTVHSKHLGKDIAAAFKTLAGGEIRSYTELLTEARNIAIQRMIAEAEKLGADAIVGIKFGSSSVMQSAAEVLAYGTAVKIKKI</sequence>
<accession>A8F6N8</accession>
<organism>
    <name type="scientific">Pseudothermotoga lettingae (strain ATCC BAA-301 / DSM 14385 / NBRC 107922 / TMO)</name>
    <name type="common">Thermotoga lettingae</name>
    <dbReference type="NCBI Taxonomy" id="416591"/>
    <lineage>
        <taxon>Bacteria</taxon>
        <taxon>Thermotogati</taxon>
        <taxon>Thermotogota</taxon>
        <taxon>Thermotogae</taxon>
        <taxon>Thermotogales</taxon>
        <taxon>Thermotogaceae</taxon>
        <taxon>Pseudothermotoga</taxon>
    </lineage>
</organism>
<dbReference type="EMBL" id="CP000812">
    <property type="protein sequence ID" value="ABV33822.1"/>
    <property type="molecule type" value="Genomic_DNA"/>
</dbReference>
<dbReference type="RefSeq" id="WP_012003298.1">
    <property type="nucleotide sequence ID" value="NZ_BSDV01000001.1"/>
</dbReference>
<dbReference type="SMR" id="A8F6N8"/>
<dbReference type="STRING" id="416591.Tlet_1264"/>
<dbReference type="KEGG" id="tle:Tlet_1264"/>
<dbReference type="eggNOG" id="COG0393">
    <property type="taxonomic scope" value="Bacteria"/>
</dbReference>
<dbReference type="HOGENOM" id="CLU_117144_1_2_0"/>
<dbReference type="OrthoDB" id="9796448at2"/>
<dbReference type="Proteomes" id="UP000002016">
    <property type="component" value="Chromosome"/>
</dbReference>
<dbReference type="Gene3D" id="3.30.110.70">
    <property type="entry name" value="Hypothetical protein apc22750. Chain B"/>
    <property type="match status" value="1"/>
</dbReference>
<dbReference type="HAMAP" id="MF_00338">
    <property type="entry name" value="UPF0145"/>
    <property type="match status" value="1"/>
</dbReference>
<dbReference type="InterPro" id="IPR035439">
    <property type="entry name" value="UPF0145_dom_sf"/>
</dbReference>
<dbReference type="InterPro" id="IPR002765">
    <property type="entry name" value="UPF0145_YbjQ-like"/>
</dbReference>
<dbReference type="PANTHER" id="PTHR34068:SF2">
    <property type="entry name" value="UPF0145 PROTEIN SCO3412"/>
    <property type="match status" value="1"/>
</dbReference>
<dbReference type="PANTHER" id="PTHR34068">
    <property type="entry name" value="UPF0145 PROTEIN YBJQ"/>
    <property type="match status" value="1"/>
</dbReference>
<dbReference type="Pfam" id="PF01906">
    <property type="entry name" value="YbjQ_1"/>
    <property type="match status" value="1"/>
</dbReference>
<dbReference type="SUPFAM" id="SSF117782">
    <property type="entry name" value="YbjQ-like"/>
    <property type="match status" value="1"/>
</dbReference>
<reference key="1">
    <citation type="submission" date="2007-08" db="EMBL/GenBank/DDBJ databases">
        <title>Complete sequence of Thermotoga lettingae TMO.</title>
        <authorList>
            <consortium name="US DOE Joint Genome Institute"/>
            <person name="Copeland A."/>
            <person name="Lucas S."/>
            <person name="Lapidus A."/>
            <person name="Barry K."/>
            <person name="Glavina del Rio T."/>
            <person name="Dalin E."/>
            <person name="Tice H."/>
            <person name="Pitluck S."/>
            <person name="Foster B."/>
            <person name="Bruce D."/>
            <person name="Schmutz J."/>
            <person name="Larimer F."/>
            <person name="Land M."/>
            <person name="Hauser L."/>
            <person name="Kyrpides N."/>
            <person name="Mikhailova N."/>
            <person name="Nelson K."/>
            <person name="Gogarten J.P."/>
            <person name="Noll K."/>
            <person name="Richardson P."/>
        </authorList>
    </citation>
    <scope>NUCLEOTIDE SEQUENCE [LARGE SCALE GENOMIC DNA]</scope>
    <source>
        <strain>ATCC BAA-301 / DSM 14385 / NBRC 107922 / TMO</strain>
    </source>
</reference>
<proteinExistence type="inferred from homology"/>
<feature type="chain" id="PRO_1000059733" description="UPF0145 protein Tlet_1264">
    <location>
        <begin position="1"/>
        <end position="106"/>
    </location>
</feature>
<evidence type="ECO:0000255" key="1">
    <source>
        <dbReference type="HAMAP-Rule" id="MF_00338"/>
    </source>
</evidence>
<name>Y1264_PSELT</name>